<evidence type="ECO:0000250" key="1">
    <source>
        <dbReference type="UniProtKB" id="Q6AY97"/>
    </source>
</evidence>
<evidence type="ECO:0000255" key="2"/>
<evidence type="ECO:0000256" key="3">
    <source>
        <dbReference type="SAM" id="MobiDB-lite"/>
    </source>
</evidence>
<evidence type="ECO:0000269" key="4">
    <source>
    </source>
</evidence>
<evidence type="ECO:0000269" key="5">
    <source>
    </source>
</evidence>
<evidence type="ECO:0000269" key="6">
    <source>
    </source>
</evidence>
<evidence type="ECO:0000269" key="7">
    <source>
    </source>
</evidence>
<evidence type="ECO:0000269" key="8">
    <source>
    </source>
</evidence>
<evidence type="ECO:0000269" key="9">
    <source ref="6"/>
</evidence>
<evidence type="ECO:0000269" key="10">
    <source ref="7"/>
</evidence>
<evidence type="ECO:0000303" key="11">
    <source>
    </source>
</evidence>
<evidence type="ECO:0000303" key="12">
    <source>
    </source>
</evidence>
<evidence type="ECO:0000303" key="13">
    <source>
    </source>
</evidence>
<evidence type="ECO:0000305" key="14"/>
<keyword id="KW-0002">3D-structure</keyword>
<keyword id="KW-0025">Alternative splicing</keyword>
<keyword id="KW-0175">Coiled coil</keyword>
<keyword id="KW-0333">Golgi apparatus</keyword>
<keyword id="KW-0472">Membrane</keyword>
<keyword id="KW-0597">Phosphoprotein</keyword>
<keyword id="KW-0653">Protein transport</keyword>
<keyword id="KW-1267">Proteomics identification</keyword>
<keyword id="KW-1185">Reference proteome</keyword>
<keyword id="KW-0813">Transport</keyword>
<protein>
    <recommendedName>
        <fullName>Coiled-coil domain-containing protein 91</fullName>
    </recommendedName>
    <alternativeName>
        <fullName>GGA-binding partner</fullName>
    </alternativeName>
    <alternativeName>
        <fullName>p56 accessory protein</fullName>
    </alternativeName>
</protein>
<accession>Q7Z6B0</accession>
<accession>B3KSA3</accession>
<accession>C9JR07</accession>
<accession>Q68D43</accession>
<accession>Q6IA78</accession>
<accession>Q8NEN7</accession>
<accession>Q9NUW9</accession>
<dbReference type="EMBL" id="AY289196">
    <property type="protein sequence ID" value="AAP42284.1"/>
    <property type="molecule type" value="mRNA"/>
</dbReference>
<dbReference type="EMBL" id="AK001950">
    <property type="protein sequence ID" value="BAA91995.1"/>
    <property type="status" value="ALT_INIT"/>
    <property type="molecule type" value="mRNA"/>
</dbReference>
<dbReference type="EMBL" id="AK093152">
    <property type="protein sequence ID" value="BAG52665.1"/>
    <property type="molecule type" value="mRNA"/>
</dbReference>
<dbReference type="EMBL" id="AC022079">
    <property type="status" value="NOT_ANNOTATED_CDS"/>
    <property type="molecule type" value="Genomic_DNA"/>
</dbReference>
<dbReference type="EMBL" id="AC024939">
    <property type="status" value="NOT_ANNOTATED_CDS"/>
    <property type="molecule type" value="Genomic_DNA"/>
</dbReference>
<dbReference type="EMBL" id="AC084754">
    <property type="status" value="NOT_ANNOTATED_CDS"/>
    <property type="molecule type" value="Genomic_DNA"/>
</dbReference>
<dbReference type="EMBL" id="BC028682">
    <property type="protein sequence ID" value="AAH28682.1"/>
    <property type="molecule type" value="mRNA"/>
</dbReference>
<dbReference type="EMBL" id="CR749586">
    <property type="protein sequence ID" value="CAH18385.1"/>
    <property type="molecule type" value="mRNA"/>
</dbReference>
<dbReference type="EMBL" id="CR457277">
    <property type="protein sequence ID" value="CAG33558.1"/>
    <property type="molecule type" value="mRNA"/>
</dbReference>
<dbReference type="EMBL" id="AY251168">
    <property type="protein sequence ID" value="AAP20065.1"/>
    <property type="molecule type" value="mRNA"/>
</dbReference>
<dbReference type="CCDS" id="CCDS81675.1">
    <molecule id="Q7Z6B0-3"/>
</dbReference>
<dbReference type="CCDS" id="CCDS8716.1">
    <molecule id="Q7Z6B0-1"/>
</dbReference>
<dbReference type="RefSeq" id="NP_001317296.1">
    <molecule id="Q7Z6B0-3"/>
    <property type="nucleotide sequence ID" value="NM_001330367.2"/>
</dbReference>
<dbReference type="RefSeq" id="NP_001339007.1">
    <molecule id="Q7Z6B0-1"/>
    <property type="nucleotide sequence ID" value="NM_001352078.2"/>
</dbReference>
<dbReference type="RefSeq" id="NP_001339008.1">
    <molecule id="Q7Z6B0-1"/>
    <property type="nucleotide sequence ID" value="NM_001352079.2"/>
</dbReference>
<dbReference type="RefSeq" id="NP_001339009.1">
    <molecule id="Q7Z6B0-1"/>
    <property type="nucleotide sequence ID" value="NM_001352080.2"/>
</dbReference>
<dbReference type="RefSeq" id="NP_001339010.1">
    <molecule id="Q7Z6B0-1"/>
    <property type="nucleotide sequence ID" value="NM_001352081.2"/>
</dbReference>
<dbReference type="RefSeq" id="NP_001339015.1">
    <molecule id="Q7Z6B0-2"/>
    <property type="nucleotide sequence ID" value="NM_001352086.2"/>
</dbReference>
<dbReference type="RefSeq" id="NP_001373929.1">
    <molecule id="Q7Z6B0-1"/>
    <property type="nucleotide sequence ID" value="NM_001387000.1"/>
</dbReference>
<dbReference type="RefSeq" id="NP_060788.3">
    <molecule id="Q7Z6B0-1"/>
    <property type="nucleotide sequence ID" value="NM_018318.4"/>
</dbReference>
<dbReference type="RefSeq" id="XP_005253471.1">
    <property type="nucleotide sequence ID" value="XM_005253414.1"/>
</dbReference>
<dbReference type="RefSeq" id="XP_005253472.1">
    <molecule id="Q7Z6B0-2"/>
    <property type="nucleotide sequence ID" value="XM_005253415.1"/>
</dbReference>
<dbReference type="RefSeq" id="XP_006719167.1">
    <property type="nucleotide sequence ID" value="XM_006719104.2"/>
</dbReference>
<dbReference type="RefSeq" id="XP_006719168.1">
    <property type="nucleotide sequence ID" value="XM_006719105.1"/>
</dbReference>
<dbReference type="RefSeq" id="XP_011519031.1">
    <property type="nucleotide sequence ID" value="XM_011520729.2"/>
</dbReference>
<dbReference type="RefSeq" id="XP_016875058.1">
    <molecule id="Q7Z6B0-1"/>
    <property type="nucleotide sequence ID" value="XM_017019569.2"/>
</dbReference>
<dbReference type="RefSeq" id="XP_016875063.1">
    <property type="nucleotide sequence ID" value="XM_017019574.1"/>
</dbReference>
<dbReference type="RefSeq" id="XP_016875064.1">
    <property type="nucleotide sequence ID" value="XM_017019575.1"/>
</dbReference>
<dbReference type="RefSeq" id="XP_016875065.1">
    <property type="nucleotide sequence ID" value="XM_017019576.1"/>
</dbReference>
<dbReference type="RefSeq" id="XP_024304801.1">
    <molecule id="Q7Z6B0-1"/>
    <property type="nucleotide sequence ID" value="XM_024449033.2"/>
</dbReference>
<dbReference type="RefSeq" id="XP_024304802.1">
    <molecule id="Q7Z6B0-1"/>
    <property type="nucleotide sequence ID" value="XM_024449034.2"/>
</dbReference>
<dbReference type="RefSeq" id="XP_047285037.1">
    <molecule id="Q7Z6B0-1"/>
    <property type="nucleotide sequence ID" value="XM_047429081.1"/>
</dbReference>
<dbReference type="RefSeq" id="XP_047285038.1">
    <molecule id="Q7Z6B0-1"/>
    <property type="nucleotide sequence ID" value="XM_047429082.1"/>
</dbReference>
<dbReference type="RefSeq" id="XP_047285039.1">
    <molecule id="Q7Z6B0-1"/>
    <property type="nucleotide sequence ID" value="XM_047429083.1"/>
</dbReference>
<dbReference type="RefSeq" id="XP_047285040.1">
    <molecule id="Q7Z6B0-1"/>
    <property type="nucleotide sequence ID" value="XM_047429084.1"/>
</dbReference>
<dbReference type="RefSeq" id="XP_047285041.1">
    <molecule id="Q7Z6B0-1"/>
    <property type="nucleotide sequence ID" value="XM_047429085.1"/>
</dbReference>
<dbReference type="RefSeq" id="XP_047285042.1">
    <molecule id="Q7Z6B0-1"/>
    <property type="nucleotide sequence ID" value="XM_047429086.1"/>
</dbReference>
<dbReference type="RefSeq" id="XP_047285043.1">
    <molecule id="Q7Z6B0-1"/>
    <property type="nucleotide sequence ID" value="XM_047429087.1"/>
</dbReference>
<dbReference type="RefSeq" id="XP_047285044.1">
    <molecule id="Q7Z6B0-1"/>
    <property type="nucleotide sequence ID" value="XM_047429088.1"/>
</dbReference>
<dbReference type="RefSeq" id="XP_047285049.1">
    <molecule id="Q7Z6B0-3"/>
    <property type="nucleotide sequence ID" value="XM_047429093.1"/>
</dbReference>
<dbReference type="RefSeq" id="XP_047285050.1">
    <molecule id="Q7Z6B0-3"/>
    <property type="nucleotide sequence ID" value="XM_047429094.1"/>
</dbReference>
<dbReference type="RefSeq" id="XP_047285051.1">
    <molecule id="Q7Z6B0-3"/>
    <property type="nucleotide sequence ID" value="XM_047429095.1"/>
</dbReference>
<dbReference type="PDB" id="1OM9">
    <property type="method" value="X-ray"/>
    <property type="resolution" value="2.50 A"/>
    <property type="chains" value="P/Q=2-16"/>
</dbReference>
<dbReference type="PDBsum" id="1OM9"/>
<dbReference type="SMR" id="Q7Z6B0"/>
<dbReference type="BioGRID" id="120584">
    <property type="interactions" value="30"/>
</dbReference>
<dbReference type="FunCoup" id="Q7Z6B0">
    <property type="interactions" value="901"/>
</dbReference>
<dbReference type="IntAct" id="Q7Z6B0">
    <property type="interactions" value="21"/>
</dbReference>
<dbReference type="STRING" id="9606.ENSP00000438040"/>
<dbReference type="iPTMnet" id="Q7Z6B0"/>
<dbReference type="PhosphoSitePlus" id="Q7Z6B0"/>
<dbReference type="BioMuta" id="CCDC91"/>
<dbReference type="DMDM" id="296434429"/>
<dbReference type="jPOST" id="Q7Z6B0"/>
<dbReference type="MassIVE" id="Q7Z6B0"/>
<dbReference type="PaxDb" id="9606-ENSP00000438040"/>
<dbReference type="PeptideAtlas" id="Q7Z6B0"/>
<dbReference type="ProteomicsDB" id="69389">
    <molecule id="Q7Z6B0-1"/>
</dbReference>
<dbReference type="ProteomicsDB" id="69390">
    <molecule id="Q7Z6B0-2"/>
</dbReference>
<dbReference type="ProteomicsDB" id="69391">
    <molecule id="Q7Z6B0-3"/>
</dbReference>
<dbReference type="Pumba" id="Q7Z6B0"/>
<dbReference type="TopDownProteomics" id="Q7Z6B0-1">
    <molecule id="Q7Z6B0-1"/>
</dbReference>
<dbReference type="Antibodypedia" id="24462">
    <property type="antibodies" value="109 antibodies from 17 providers"/>
</dbReference>
<dbReference type="DNASU" id="55297"/>
<dbReference type="Ensembl" id="ENST00000381259.5">
    <molecule id="Q7Z6B0-1"/>
    <property type="protein sequence ID" value="ENSP00000370658.1"/>
    <property type="gene ID" value="ENSG00000123106.11"/>
</dbReference>
<dbReference type="Ensembl" id="ENST00000536442.6">
    <molecule id="Q7Z6B0-1"/>
    <property type="protein sequence ID" value="ENSP00000445660.2"/>
    <property type="gene ID" value="ENSG00000123106.11"/>
</dbReference>
<dbReference type="Ensembl" id="ENST00000539107.5">
    <molecule id="Q7Z6B0-3"/>
    <property type="protein sequence ID" value="ENSP00000440513.1"/>
    <property type="gene ID" value="ENSG00000123106.11"/>
</dbReference>
<dbReference type="Ensembl" id="ENST00000545336.5">
    <molecule id="Q7Z6B0-1"/>
    <property type="protein sequence ID" value="ENSP00000438040.1"/>
    <property type="gene ID" value="ENSG00000123106.11"/>
</dbReference>
<dbReference type="GeneID" id="55297"/>
<dbReference type="KEGG" id="hsa:55297"/>
<dbReference type="MANE-Select" id="ENST00000536442.6">
    <property type="protein sequence ID" value="ENSP00000445660.2"/>
    <property type="RefSeq nucleotide sequence ID" value="NM_018318.5"/>
    <property type="RefSeq protein sequence ID" value="NP_060788.3"/>
</dbReference>
<dbReference type="UCSC" id="uc001riq.4">
    <molecule id="Q7Z6B0-1"/>
    <property type="organism name" value="human"/>
</dbReference>
<dbReference type="AGR" id="HGNC:24855"/>
<dbReference type="CTD" id="55297"/>
<dbReference type="DisGeNET" id="55297"/>
<dbReference type="GeneCards" id="CCDC91"/>
<dbReference type="HGNC" id="HGNC:24855">
    <property type="gene designation" value="CCDC91"/>
</dbReference>
<dbReference type="HPA" id="ENSG00000123106">
    <property type="expression patterns" value="Low tissue specificity"/>
</dbReference>
<dbReference type="MIM" id="617366">
    <property type="type" value="gene"/>
</dbReference>
<dbReference type="neXtProt" id="NX_Q7Z6B0"/>
<dbReference type="OpenTargets" id="ENSG00000123106"/>
<dbReference type="PharmGKB" id="PA144596458"/>
<dbReference type="VEuPathDB" id="HostDB:ENSG00000123106"/>
<dbReference type="eggNOG" id="ENOG502QW5U">
    <property type="taxonomic scope" value="Eukaryota"/>
</dbReference>
<dbReference type="GeneTree" id="ENSGT00390000015899"/>
<dbReference type="HOGENOM" id="CLU_050535_1_0_1"/>
<dbReference type="InParanoid" id="Q7Z6B0"/>
<dbReference type="OMA" id="IQQSAHT"/>
<dbReference type="OrthoDB" id="6146069at2759"/>
<dbReference type="PAN-GO" id="Q7Z6B0">
    <property type="GO annotations" value="2 GO annotations based on evolutionary models"/>
</dbReference>
<dbReference type="PhylomeDB" id="Q7Z6B0"/>
<dbReference type="TreeFam" id="TF336441"/>
<dbReference type="PathwayCommons" id="Q7Z6B0"/>
<dbReference type="SignaLink" id="Q7Z6B0"/>
<dbReference type="BioGRID-ORCS" id="55297">
    <property type="hits" value="17 hits in 1159 CRISPR screens"/>
</dbReference>
<dbReference type="ChiTaRS" id="CCDC91">
    <property type="organism name" value="human"/>
</dbReference>
<dbReference type="EvolutionaryTrace" id="Q7Z6B0"/>
<dbReference type="GenomeRNAi" id="55297"/>
<dbReference type="Pharos" id="Q7Z6B0">
    <property type="development level" value="Tbio"/>
</dbReference>
<dbReference type="PRO" id="PR:Q7Z6B0"/>
<dbReference type="Proteomes" id="UP000005640">
    <property type="component" value="Chromosome 12"/>
</dbReference>
<dbReference type="RNAct" id="Q7Z6B0">
    <property type="molecule type" value="protein"/>
</dbReference>
<dbReference type="Bgee" id="ENSG00000123106">
    <property type="expression patterns" value="Expressed in left testis and 198 other cell types or tissues"/>
</dbReference>
<dbReference type="ExpressionAtlas" id="Q7Z6B0">
    <property type="expression patterns" value="baseline and differential"/>
</dbReference>
<dbReference type="GO" id="GO:0005829">
    <property type="term" value="C:cytosol"/>
    <property type="evidence" value="ECO:0007669"/>
    <property type="project" value="GOC"/>
</dbReference>
<dbReference type="GO" id="GO:0005794">
    <property type="term" value="C:Golgi apparatus"/>
    <property type="evidence" value="ECO:0000314"/>
    <property type="project" value="HPA"/>
</dbReference>
<dbReference type="GO" id="GO:0016020">
    <property type="term" value="C:membrane"/>
    <property type="evidence" value="ECO:0007669"/>
    <property type="project" value="UniProtKB-SubCell"/>
</dbReference>
<dbReference type="GO" id="GO:0005654">
    <property type="term" value="C:nucleoplasm"/>
    <property type="evidence" value="ECO:0000314"/>
    <property type="project" value="HPA"/>
</dbReference>
<dbReference type="GO" id="GO:0005802">
    <property type="term" value="C:trans-Golgi network"/>
    <property type="evidence" value="ECO:0000314"/>
    <property type="project" value="UniProtKB"/>
</dbReference>
<dbReference type="GO" id="GO:0042802">
    <property type="term" value="F:identical protein binding"/>
    <property type="evidence" value="ECO:0007669"/>
    <property type="project" value="Ensembl"/>
</dbReference>
<dbReference type="GO" id="GO:0090160">
    <property type="term" value="P:Golgi to lysosome transport"/>
    <property type="evidence" value="ECO:0000315"/>
    <property type="project" value="UniProtKB"/>
</dbReference>
<dbReference type="GO" id="GO:0015031">
    <property type="term" value="P:protein transport"/>
    <property type="evidence" value="ECO:0007669"/>
    <property type="project" value="UniProtKB-KW"/>
</dbReference>
<dbReference type="InterPro" id="IPR034592">
    <property type="entry name" value="CCDC91"/>
</dbReference>
<dbReference type="PANTHER" id="PTHR35072">
    <property type="entry name" value="COILED-COIL DOMAIN-CONTAINING PROTEIN 91"/>
    <property type="match status" value="1"/>
</dbReference>
<dbReference type="PANTHER" id="PTHR35072:SF1">
    <property type="entry name" value="COILED-COIL DOMAIN-CONTAINING PROTEIN 91"/>
    <property type="match status" value="1"/>
</dbReference>
<feature type="chain" id="PRO_0000087478" description="Coiled-coil domain-containing protein 91">
    <location>
        <begin position="1"/>
        <end position="441"/>
    </location>
</feature>
<feature type="region of interest" description="Disordered" evidence="3">
    <location>
        <begin position="1"/>
        <end position="26"/>
    </location>
</feature>
<feature type="region of interest" description="GGA1-binding motif">
    <location>
        <begin position="1"/>
        <end position="16"/>
    </location>
</feature>
<feature type="region of interest" description="Homodimerization">
    <location>
        <begin position="210"/>
        <end position="413"/>
    </location>
</feature>
<feature type="coiled-coil region" evidence="2">
    <location>
        <begin position="130"/>
        <end position="209"/>
    </location>
</feature>
<feature type="coiled-coil region" evidence="2">
    <location>
        <begin position="249"/>
        <end position="407"/>
    </location>
</feature>
<feature type="modified residue" description="Phosphoserine" evidence="1">
    <location>
        <position position="43"/>
    </location>
</feature>
<feature type="modified residue" description="Phosphoserine" evidence="1">
    <location>
        <position position="46"/>
    </location>
</feature>
<feature type="splice variant" id="VSP_013243" description="In isoform 2." evidence="11 12">
    <original>MDDDDFGGFEAAETFDGGSGETQTTSPAIPWAAFPA</original>
    <variation>MPMWNK</variation>
    <location>
        <begin position="1"/>
        <end position="36"/>
    </location>
</feature>
<feature type="splice variant" id="VSP_013244" description="In isoform 3." evidence="13">
    <location>
        <begin position="219"/>
        <end position="254"/>
    </location>
</feature>
<feature type="sequence variant" id="VAR_021531" description="In dbSNP:rs1133028.">
    <original>M</original>
    <variation>V</variation>
    <location>
        <position position="261"/>
    </location>
</feature>
<feature type="sequence variant" id="VAR_021532" description="In dbSNP:rs10771427." evidence="4 6 7 9 10">
    <original>V</original>
    <variation>M</variation>
    <location>
        <position position="314"/>
    </location>
</feature>
<feature type="sequence conflict" description="In Ref. 1; AAP42284." evidence="14" ref="1">
    <original>A</original>
    <variation>T</variation>
    <location>
        <position position="36"/>
    </location>
</feature>
<feature type="sequence conflict" description="In Ref. 5; CAH18385." evidence="14" ref="5">
    <original>I</original>
    <variation>V</variation>
    <location>
        <position position="278"/>
    </location>
</feature>
<feature type="sequence conflict" description="In Ref. 5; CAH18385." evidence="14" ref="5">
    <original>Q</original>
    <variation>R</variation>
    <location>
        <position position="284"/>
    </location>
</feature>
<feature type="sequence conflict" description="In Ref. 6; CAG33558." evidence="14" ref="6">
    <original>E</original>
    <variation>D</variation>
    <location>
        <position position="441"/>
    </location>
</feature>
<organism>
    <name type="scientific">Homo sapiens</name>
    <name type="common">Human</name>
    <dbReference type="NCBI Taxonomy" id="9606"/>
    <lineage>
        <taxon>Eukaryota</taxon>
        <taxon>Metazoa</taxon>
        <taxon>Chordata</taxon>
        <taxon>Craniata</taxon>
        <taxon>Vertebrata</taxon>
        <taxon>Euteleostomi</taxon>
        <taxon>Mammalia</taxon>
        <taxon>Eutheria</taxon>
        <taxon>Euarchontoglires</taxon>
        <taxon>Primates</taxon>
        <taxon>Haplorrhini</taxon>
        <taxon>Catarrhini</taxon>
        <taxon>Hominidae</taxon>
        <taxon>Homo</taxon>
    </lineage>
</organism>
<proteinExistence type="evidence at protein level"/>
<gene>
    <name type="primary">CCDC91</name>
    <name type="synonym">GGABP</name>
    <name type="ORF">HSD8</name>
</gene>
<reference key="1">
    <citation type="journal article" date="2003" name="Mol. Biol. Cell">
        <title>Binding partners for the COOH-terminal appendage domains of the GGAs and gamma-adaptin.</title>
        <authorList>
            <person name="Lui W.W.Y."/>
            <person name="Collins B.M."/>
            <person name="Hirst J."/>
            <person name="Motley A."/>
            <person name="Millar C."/>
            <person name="Schu P."/>
            <person name="Owen D.J."/>
            <person name="Robinson M.S."/>
        </authorList>
    </citation>
    <scope>NUCLEOTIDE SEQUENCE [MRNA] (ISOFORM 1)</scope>
    <scope>SUBCELLULAR LOCATION</scope>
    <scope>TISSUE SPECIFICITY</scope>
    <scope>INTERACTION WITH GGA1; GGA2 AND AP1G1</scope>
    <scope>DIMERIZATION</scope>
    <scope>VARIANT MET-314</scope>
</reference>
<reference key="2">
    <citation type="journal article" date="2004" name="Nat. Genet.">
        <title>Complete sequencing and characterization of 21,243 full-length human cDNAs.</title>
        <authorList>
            <person name="Ota T."/>
            <person name="Suzuki Y."/>
            <person name="Nishikawa T."/>
            <person name="Otsuki T."/>
            <person name="Sugiyama T."/>
            <person name="Irie R."/>
            <person name="Wakamatsu A."/>
            <person name="Hayashi K."/>
            <person name="Sato H."/>
            <person name="Nagai K."/>
            <person name="Kimura K."/>
            <person name="Makita H."/>
            <person name="Sekine M."/>
            <person name="Obayashi M."/>
            <person name="Nishi T."/>
            <person name="Shibahara T."/>
            <person name="Tanaka T."/>
            <person name="Ishii S."/>
            <person name="Yamamoto J."/>
            <person name="Saito K."/>
            <person name="Kawai Y."/>
            <person name="Isono Y."/>
            <person name="Nakamura Y."/>
            <person name="Nagahari K."/>
            <person name="Murakami K."/>
            <person name="Yasuda T."/>
            <person name="Iwayanagi T."/>
            <person name="Wagatsuma M."/>
            <person name="Shiratori A."/>
            <person name="Sudo H."/>
            <person name="Hosoiri T."/>
            <person name="Kaku Y."/>
            <person name="Kodaira H."/>
            <person name="Kondo H."/>
            <person name="Sugawara M."/>
            <person name="Takahashi M."/>
            <person name="Kanda K."/>
            <person name="Yokoi T."/>
            <person name="Furuya T."/>
            <person name="Kikkawa E."/>
            <person name="Omura Y."/>
            <person name="Abe K."/>
            <person name="Kamihara K."/>
            <person name="Katsuta N."/>
            <person name="Sato K."/>
            <person name="Tanikawa M."/>
            <person name="Yamazaki M."/>
            <person name="Ninomiya K."/>
            <person name="Ishibashi T."/>
            <person name="Yamashita H."/>
            <person name="Murakawa K."/>
            <person name="Fujimori K."/>
            <person name="Tanai H."/>
            <person name="Kimata M."/>
            <person name="Watanabe M."/>
            <person name="Hiraoka S."/>
            <person name="Chiba Y."/>
            <person name="Ishida S."/>
            <person name="Ono Y."/>
            <person name="Takiguchi S."/>
            <person name="Watanabe S."/>
            <person name="Yosida M."/>
            <person name="Hotuta T."/>
            <person name="Kusano J."/>
            <person name="Kanehori K."/>
            <person name="Takahashi-Fujii A."/>
            <person name="Hara H."/>
            <person name="Tanase T.-O."/>
            <person name="Nomura Y."/>
            <person name="Togiya S."/>
            <person name="Komai F."/>
            <person name="Hara R."/>
            <person name="Takeuchi K."/>
            <person name="Arita M."/>
            <person name="Imose N."/>
            <person name="Musashino K."/>
            <person name="Yuuki H."/>
            <person name="Oshima A."/>
            <person name="Sasaki N."/>
            <person name="Aotsuka S."/>
            <person name="Yoshikawa Y."/>
            <person name="Matsunawa H."/>
            <person name="Ichihara T."/>
            <person name="Shiohata N."/>
            <person name="Sano S."/>
            <person name="Moriya S."/>
            <person name="Momiyama H."/>
            <person name="Satoh N."/>
            <person name="Takami S."/>
            <person name="Terashima Y."/>
            <person name="Suzuki O."/>
            <person name="Nakagawa S."/>
            <person name="Senoh A."/>
            <person name="Mizoguchi H."/>
            <person name="Goto Y."/>
            <person name="Shimizu F."/>
            <person name="Wakebe H."/>
            <person name="Hishigaki H."/>
            <person name="Watanabe T."/>
            <person name="Sugiyama A."/>
            <person name="Takemoto M."/>
            <person name="Kawakami B."/>
            <person name="Yamazaki M."/>
            <person name="Watanabe K."/>
            <person name="Kumagai A."/>
            <person name="Itakura S."/>
            <person name="Fukuzumi Y."/>
            <person name="Fujimori Y."/>
            <person name="Komiyama M."/>
            <person name="Tashiro H."/>
            <person name="Tanigami A."/>
            <person name="Fujiwara T."/>
            <person name="Ono T."/>
            <person name="Yamada K."/>
            <person name="Fujii Y."/>
            <person name="Ozaki K."/>
            <person name="Hirao M."/>
            <person name="Ohmori Y."/>
            <person name="Kawabata A."/>
            <person name="Hikiji T."/>
            <person name="Kobatake N."/>
            <person name="Inagaki H."/>
            <person name="Ikema Y."/>
            <person name="Okamoto S."/>
            <person name="Okitani R."/>
            <person name="Kawakami T."/>
            <person name="Noguchi S."/>
            <person name="Itoh T."/>
            <person name="Shigeta K."/>
            <person name="Senba T."/>
            <person name="Matsumura K."/>
            <person name="Nakajima Y."/>
            <person name="Mizuno T."/>
            <person name="Morinaga M."/>
            <person name="Sasaki M."/>
            <person name="Togashi T."/>
            <person name="Oyama M."/>
            <person name="Hata H."/>
            <person name="Watanabe M."/>
            <person name="Komatsu T."/>
            <person name="Mizushima-Sugano J."/>
            <person name="Satoh T."/>
            <person name="Shirai Y."/>
            <person name="Takahashi Y."/>
            <person name="Nakagawa K."/>
            <person name="Okumura K."/>
            <person name="Nagase T."/>
            <person name="Nomura N."/>
            <person name="Kikuchi H."/>
            <person name="Masuho Y."/>
            <person name="Yamashita R."/>
            <person name="Nakai K."/>
            <person name="Yada T."/>
            <person name="Nakamura Y."/>
            <person name="Ohara O."/>
            <person name="Isogai T."/>
            <person name="Sugano S."/>
        </authorList>
    </citation>
    <scope>NUCLEOTIDE SEQUENCE [LARGE SCALE MRNA] (ISOFORM 2)</scope>
    <scope>NUCLEOTIDE SEQUENCE [LARGE SCALE MRNA] OF 167-441 (ISOFORM 1)</scope>
    <scope>VARIANT MET-314</scope>
    <source>
        <tissue>Placenta</tissue>
        <tissue>Testis</tissue>
    </source>
</reference>
<reference key="3">
    <citation type="journal article" date="2006" name="Nature">
        <title>The finished DNA sequence of human chromosome 12.</title>
        <authorList>
            <person name="Scherer S.E."/>
            <person name="Muzny D.M."/>
            <person name="Buhay C.J."/>
            <person name="Chen R."/>
            <person name="Cree A."/>
            <person name="Ding Y."/>
            <person name="Dugan-Rocha S."/>
            <person name="Gill R."/>
            <person name="Gunaratne P."/>
            <person name="Harris R.A."/>
            <person name="Hawes A.C."/>
            <person name="Hernandez J."/>
            <person name="Hodgson A.V."/>
            <person name="Hume J."/>
            <person name="Jackson A."/>
            <person name="Khan Z.M."/>
            <person name="Kovar-Smith C."/>
            <person name="Lewis L.R."/>
            <person name="Lozado R.J."/>
            <person name="Metzker M.L."/>
            <person name="Milosavljevic A."/>
            <person name="Miner G.R."/>
            <person name="Montgomery K.T."/>
            <person name="Morgan M.B."/>
            <person name="Nazareth L.V."/>
            <person name="Scott G."/>
            <person name="Sodergren E."/>
            <person name="Song X.-Z."/>
            <person name="Steffen D."/>
            <person name="Lovering R.C."/>
            <person name="Wheeler D.A."/>
            <person name="Worley K.C."/>
            <person name="Yuan Y."/>
            <person name="Zhang Z."/>
            <person name="Adams C.Q."/>
            <person name="Ansari-Lari M.A."/>
            <person name="Ayele M."/>
            <person name="Brown M.J."/>
            <person name="Chen G."/>
            <person name="Chen Z."/>
            <person name="Clerc-Blankenburg K.P."/>
            <person name="Davis C."/>
            <person name="Delgado O."/>
            <person name="Dinh H.H."/>
            <person name="Draper H."/>
            <person name="Gonzalez-Garay M.L."/>
            <person name="Havlak P."/>
            <person name="Jackson L.R."/>
            <person name="Jacob L.S."/>
            <person name="Kelly S.H."/>
            <person name="Li L."/>
            <person name="Li Z."/>
            <person name="Liu J."/>
            <person name="Liu W."/>
            <person name="Lu J."/>
            <person name="Maheshwari M."/>
            <person name="Nguyen B.-V."/>
            <person name="Okwuonu G.O."/>
            <person name="Pasternak S."/>
            <person name="Perez L.M."/>
            <person name="Plopper F.J.H."/>
            <person name="Santibanez J."/>
            <person name="Shen H."/>
            <person name="Tabor P.E."/>
            <person name="Verduzco D."/>
            <person name="Waldron L."/>
            <person name="Wang Q."/>
            <person name="Williams G.A."/>
            <person name="Zhang J."/>
            <person name="Zhou J."/>
            <person name="Allen C.C."/>
            <person name="Amin A.G."/>
            <person name="Anyalebechi V."/>
            <person name="Bailey M."/>
            <person name="Barbaria J.A."/>
            <person name="Bimage K.E."/>
            <person name="Bryant N.P."/>
            <person name="Burch P.E."/>
            <person name="Burkett C.E."/>
            <person name="Burrell K.L."/>
            <person name="Calderon E."/>
            <person name="Cardenas V."/>
            <person name="Carter K."/>
            <person name="Casias K."/>
            <person name="Cavazos I."/>
            <person name="Cavazos S.R."/>
            <person name="Ceasar H."/>
            <person name="Chacko J."/>
            <person name="Chan S.N."/>
            <person name="Chavez D."/>
            <person name="Christopoulos C."/>
            <person name="Chu J."/>
            <person name="Cockrell R."/>
            <person name="Cox C.D."/>
            <person name="Dang M."/>
            <person name="Dathorne S.R."/>
            <person name="David R."/>
            <person name="Davis C.M."/>
            <person name="Davy-Carroll L."/>
            <person name="Deshazo D.R."/>
            <person name="Donlin J.E."/>
            <person name="D'Souza L."/>
            <person name="Eaves K.A."/>
            <person name="Egan A."/>
            <person name="Emery-Cohen A.J."/>
            <person name="Escotto M."/>
            <person name="Flagg N."/>
            <person name="Forbes L.D."/>
            <person name="Gabisi A.M."/>
            <person name="Garza M."/>
            <person name="Hamilton C."/>
            <person name="Henderson N."/>
            <person name="Hernandez O."/>
            <person name="Hines S."/>
            <person name="Hogues M.E."/>
            <person name="Huang M."/>
            <person name="Idlebird D.G."/>
            <person name="Johnson R."/>
            <person name="Jolivet A."/>
            <person name="Jones S."/>
            <person name="Kagan R."/>
            <person name="King L.M."/>
            <person name="Leal B."/>
            <person name="Lebow H."/>
            <person name="Lee S."/>
            <person name="LeVan J.M."/>
            <person name="Lewis L.C."/>
            <person name="London P."/>
            <person name="Lorensuhewa L.M."/>
            <person name="Loulseged H."/>
            <person name="Lovett D.A."/>
            <person name="Lucier A."/>
            <person name="Lucier R.L."/>
            <person name="Ma J."/>
            <person name="Madu R.C."/>
            <person name="Mapua P."/>
            <person name="Martindale A.D."/>
            <person name="Martinez E."/>
            <person name="Massey E."/>
            <person name="Mawhiney S."/>
            <person name="Meador M.G."/>
            <person name="Mendez S."/>
            <person name="Mercado C."/>
            <person name="Mercado I.C."/>
            <person name="Merritt C.E."/>
            <person name="Miner Z.L."/>
            <person name="Minja E."/>
            <person name="Mitchell T."/>
            <person name="Mohabbat F."/>
            <person name="Mohabbat K."/>
            <person name="Montgomery B."/>
            <person name="Moore N."/>
            <person name="Morris S."/>
            <person name="Munidasa M."/>
            <person name="Ngo R.N."/>
            <person name="Nguyen N.B."/>
            <person name="Nickerson E."/>
            <person name="Nwaokelemeh O.O."/>
            <person name="Nwokenkwo S."/>
            <person name="Obregon M."/>
            <person name="Oguh M."/>
            <person name="Oragunye N."/>
            <person name="Oviedo R.J."/>
            <person name="Parish B.J."/>
            <person name="Parker D.N."/>
            <person name="Parrish J."/>
            <person name="Parks K.L."/>
            <person name="Paul H.A."/>
            <person name="Payton B.A."/>
            <person name="Perez A."/>
            <person name="Perrin W."/>
            <person name="Pickens A."/>
            <person name="Primus E.L."/>
            <person name="Pu L.-L."/>
            <person name="Puazo M."/>
            <person name="Quiles M.M."/>
            <person name="Quiroz J.B."/>
            <person name="Rabata D."/>
            <person name="Reeves K."/>
            <person name="Ruiz S.J."/>
            <person name="Shao H."/>
            <person name="Sisson I."/>
            <person name="Sonaike T."/>
            <person name="Sorelle R.P."/>
            <person name="Sutton A.E."/>
            <person name="Svatek A.F."/>
            <person name="Svetz L.A."/>
            <person name="Tamerisa K.S."/>
            <person name="Taylor T.R."/>
            <person name="Teague B."/>
            <person name="Thomas N."/>
            <person name="Thorn R.D."/>
            <person name="Trejos Z.Y."/>
            <person name="Trevino B.K."/>
            <person name="Ukegbu O.N."/>
            <person name="Urban J.B."/>
            <person name="Vasquez L.I."/>
            <person name="Vera V.A."/>
            <person name="Villasana D.M."/>
            <person name="Wang L."/>
            <person name="Ward-Moore S."/>
            <person name="Warren J.T."/>
            <person name="Wei X."/>
            <person name="White F."/>
            <person name="Williamson A.L."/>
            <person name="Wleczyk R."/>
            <person name="Wooden H.S."/>
            <person name="Wooden S.H."/>
            <person name="Yen J."/>
            <person name="Yoon L."/>
            <person name="Yoon V."/>
            <person name="Zorrilla S.E."/>
            <person name="Nelson D."/>
            <person name="Kucherlapati R."/>
            <person name="Weinstock G."/>
            <person name="Gibbs R.A."/>
        </authorList>
    </citation>
    <scope>NUCLEOTIDE SEQUENCE [LARGE SCALE GENOMIC DNA]</scope>
</reference>
<reference key="4">
    <citation type="journal article" date="2004" name="Genome Res.">
        <title>The status, quality, and expansion of the NIH full-length cDNA project: the Mammalian Gene Collection (MGC).</title>
        <authorList>
            <consortium name="The MGC Project Team"/>
        </authorList>
    </citation>
    <scope>NUCLEOTIDE SEQUENCE [LARGE SCALE MRNA] (ISOFORM 2)</scope>
    <scope>VARIANT MET-314</scope>
    <source>
        <tissue>Testis</tissue>
    </source>
</reference>
<reference key="5">
    <citation type="journal article" date="2007" name="BMC Genomics">
        <title>The full-ORF clone resource of the German cDNA consortium.</title>
        <authorList>
            <person name="Bechtel S."/>
            <person name="Rosenfelder H."/>
            <person name="Duda A."/>
            <person name="Schmidt C.P."/>
            <person name="Ernst U."/>
            <person name="Wellenreuther R."/>
            <person name="Mehrle A."/>
            <person name="Schuster C."/>
            <person name="Bahr A."/>
            <person name="Bloecker H."/>
            <person name="Heubner D."/>
            <person name="Hoerlein A."/>
            <person name="Michel G."/>
            <person name="Wedler H."/>
            <person name="Koehrer K."/>
            <person name="Ottenwaelder B."/>
            <person name="Poustka A."/>
            <person name="Wiemann S."/>
            <person name="Schupp I."/>
        </authorList>
    </citation>
    <scope>NUCLEOTIDE SEQUENCE [LARGE SCALE MRNA] OF 108-441 (ISOFORM 3)</scope>
    <source>
        <tissue>Liver</tissue>
    </source>
</reference>
<reference key="6">
    <citation type="submission" date="2004-06" db="EMBL/GenBank/DDBJ databases">
        <title>Cloning of human full open reading frames in Gateway(TM) system entry vector (pDONR201).</title>
        <authorList>
            <person name="Ebert L."/>
            <person name="Schick M."/>
            <person name="Neubert P."/>
            <person name="Schatten R."/>
            <person name="Henze S."/>
            <person name="Korn B."/>
        </authorList>
    </citation>
    <scope>NUCLEOTIDE SEQUENCE [LARGE SCALE MRNA] OF 202-441</scope>
    <scope>VARIANT MET-314</scope>
</reference>
<reference key="7">
    <citation type="submission" date="2003-03" db="EMBL/GenBank/DDBJ databases">
        <title>A new spermatogenesis-related gene.</title>
        <authorList>
            <person name="Hu T.H."/>
            <person name="Miao S.Y."/>
            <person name="Zhang X.D."/>
            <person name="Qiao Y."/>
            <person name="Liang G."/>
            <person name="Wang L.F."/>
        </authorList>
    </citation>
    <scope>NUCLEOTIDE SEQUENCE [LARGE SCALE MRNA] OF 202-441</scope>
    <scope>VARIANT MET-314</scope>
    <source>
        <tissue>Testis</tissue>
    </source>
</reference>
<reference key="8">
    <citation type="journal article" date="2007" name="Mol. Biol. Cell">
        <title>The trans-Golgi network accessory protein p56 promotes long-range movement of GGA/clathrin-containing transport carriers and lysosomal enzyme sorting.</title>
        <authorList>
            <person name="Mardones G.A."/>
            <person name="Burgos P.V."/>
            <person name="Brooks D.A."/>
            <person name="Parkinson-Lawrence E."/>
            <person name="Mattera R."/>
            <person name="Bonifacino J.S."/>
        </authorList>
    </citation>
    <scope>SUBCELLULAR LOCATION</scope>
    <scope>FUNCTION</scope>
</reference>
<reference key="9">
    <citation type="journal article" date="2013" name="J. Proteome Res.">
        <title>Toward a comprehensive characterization of a human cancer cell phosphoproteome.</title>
        <authorList>
            <person name="Zhou H."/>
            <person name="Di Palma S."/>
            <person name="Preisinger C."/>
            <person name="Peng M."/>
            <person name="Polat A.N."/>
            <person name="Heck A.J."/>
            <person name="Mohammed S."/>
        </authorList>
    </citation>
    <scope>IDENTIFICATION BY MASS SPECTROMETRY [LARGE SCALE ANALYSIS]</scope>
    <source>
        <tissue>Erythroleukemia</tissue>
    </source>
</reference>
<reference key="10">
    <citation type="journal article" date="2003" name="Nat. Struct. Biol.">
        <title>Structural basis for binding of accessory proteins by the appendage domain of GGAs.</title>
        <authorList>
            <person name="Collins B.M."/>
            <person name="Praefcke G.J."/>
            <person name="Robinson M.S."/>
            <person name="Owen D.J."/>
        </authorList>
    </citation>
    <scope>X-RAY CRYSTALLOGRAPHY (2.5 ANGSTROMS) OF 2-16 IN COMPLEX WITH GGA1</scope>
</reference>
<comment type="function">
    <text evidence="8">Involved in the regulation of membrane traffic through the trans-Golgi network (TGN). Functions in close cooperation with the GGAs in the sorting of hydrolases to lysosomes.</text>
</comment>
<comment type="subunit">
    <text evidence="4 5">Homodimer. Interacts with GGA1, GGA2 and AP1G1.</text>
</comment>
<comment type="interaction">
    <interactant intactId="EBI-12012082">
        <id>Q7Z6B0-2</id>
    </interactant>
    <interactant intactId="EBI-295634">
        <id>Q16543</id>
        <label>CDC37</label>
    </interactant>
    <organismsDiffer>false</organismsDiffer>
    <experiments>3</experiments>
</comment>
<comment type="interaction">
    <interactant intactId="EBI-12012082">
        <id>Q7Z6B0-2</id>
    </interactant>
    <interactant intactId="EBI-77154">
        <id>Q9UIK4</id>
        <label>DAPK2</label>
    </interactant>
    <organismsDiffer>false</organismsDiffer>
    <experiments>3</experiments>
</comment>
<comment type="interaction">
    <interactant intactId="EBI-12012082">
        <id>Q7Z6B0-2</id>
    </interactant>
    <interactant intactId="EBI-739832">
        <id>Q8TBB1</id>
        <label>LNX1</label>
    </interactant>
    <organismsDiffer>false</organismsDiffer>
    <experiments>3</experiments>
</comment>
<comment type="interaction">
    <interactant intactId="EBI-12012082">
        <id>Q7Z6B0-2</id>
    </interactant>
    <interactant intactId="EBI-1567866">
        <id>Q6MZQ0</id>
        <label>PRR5L</label>
    </interactant>
    <organismsDiffer>false</organismsDiffer>
    <experiments>3</experiments>
</comment>
<comment type="subcellular location">
    <subcellularLocation>
        <location evidence="4">Membrane</location>
        <topology evidence="4">Peripheral membrane protein</topology>
    </subcellularLocation>
    <subcellularLocation>
        <location evidence="4">Golgi apparatus</location>
        <location evidence="4">trans-Golgi network membrane</location>
        <topology evidence="4">Peripheral membrane protein</topology>
    </subcellularLocation>
    <subcellularLocation>
        <location evidence="8">Golgi apparatus</location>
        <location evidence="8">trans-Golgi network</location>
    </subcellularLocation>
    <text evidence="4 8">Colocalizes with GGA1, GGA2 and GGA3.</text>
</comment>
<comment type="alternative products">
    <event type="alternative splicing"/>
    <isoform>
        <id>Q7Z6B0-1</id>
        <name>1</name>
        <sequence type="displayed"/>
    </isoform>
    <isoform>
        <id>Q7Z6B0-2</id>
        <name>2</name>
        <sequence type="described" ref="VSP_013243"/>
    </isoform>
    <isoform>
        <id>Q7Z6B0-3</id>
        <name>3</name>
        <sequence type="described" ref="VSP_013244"/>
    </isoform>
</comment>
<comment type="tissue specificity">
    <text evidence="4">Widely expressed.</text>
</comment>
<comment type="miscellaneous">
    <molecule>Isoform 1</molecule>
    <text>Binds GGAs.</text>
</comment>
<comment type="miscellaneous">
    <molecule>Isoform 2</molecule>
    <text evidence="14">Does not bind GGAs.</text>
</comment>
<comment type="sequence caution" evidence="14">
    <conflict type="erroneous initiation">
        <sequence resource="EMBL-CDS" id="BAA91995"/>
    </conflict>
    <text>Truncated N-terminus.</text>
</comment>
<sequence length="441" mass="49971">MDDDDFGGFEAAETFDGGSGETQTTSPAIPWAAFPAVSGVHLSPSSPEIVLDRDHSSSIGCLSSDAIISSPENTHAANSIVSQTIPKAQIQQSTHTHLDISLFPLGLTDEKSNGTIALVDDSEDPGANVSNIQLQQKISSLEIKLKVSEEEKQRIKQDVESLMEKHNVLEKGFLKEKEQEAISFQDRYKELQEKHKQELEDMRKAGHEALSIIVDEYKALLQSSVKQQVEAIEKQYISAIEKQAHKCEELLNAQHQRLLEMLDTEKELLKEKIKEALIQQSQEQKEILEKCLEEERQRNKEALVSAAKLEKEAVKDAVLKVVEEERKNLEKAHAEERELWKTEHAKDQEKVSQEIQKAIQEQRKISQETVKAAIIEEQKRSEKAVEEAVKRTRDELIEYIKEQKRLDQVIRQRSLSSLELFLSCAQKQLSALIATEPVDIE</sequence>
<name>CCD91_HUMAN</name>